<proteinExistence type="inferred from homology"/>
<reference key="1">
    <citation type="submission" date="2000-10" db="EMBL/GenBank/DDBJ databases">
        <authorList>
            <person name="Casares L."/>
            <person name="Tapias A."/>
            <person name="Llagostera M."/>
            <person name="Barbe J."/>
        </authorList>
    </citation>
    <scope>NUCLEOTIDE SEQUENCE [GENOMIC DNA]</scope>
</reference>
<evidence type="ECO:0000255" key="1">
    <source>
        <dbReference type="HAMAP-Rule" id="MF_00268"/>
    </source>
</evidence>
<protein>
    <recommendedName>
        <fullName evidence="1">Protein RecA</fullName>
    </recommendedName>
    <alternativeName>
        <fullName evidence="1">Recombinase A</fullName>
    </alternativeName>
</protein>
<comment type="function">
    <text evidence="1">Can catalyze the hydrolysis of ATP in the presence of single-stranded DNA, the ATP-dependent uptake of single-stranded DNA by duplex DNA, and the ATP-dependent hybridization of homologous single-stranded DNAs. It interacts with LexA causing its activation and leading to its autocatalytic cleavage.</text>
</comment>
<comment type="subcellular location">
    <subcellularLocation>
        <location evidence="1">Cytoplasm</location>
    </subcellularLocation>
</comment>
<comment type="similarity">
    <text evidence="1">Belongs to the RecA family.</text>
</comment>
<accession>Q9APB2</accession>
<keyword id="KW-0067">ATP-binding</keyword>
<keyword id="KW-0963">Cytoplasm</keyword>
<keyword id="KW-0227">DNA damage</keyword>
<keyword id="KW-0233">DNA recombination</keyword>
<keyword id="KW-0234">DNA repair</keyword>
<keyword id="KW-0238">DNA-binding</keyword>
<keyword id="KW-0547">Nucleotide-binding</keyword>
<keyword id="KW-0742">SOS response</keyword>
<sequence length="353" mass="37469">MDDKKAGAGVSAEKQKALAAALSQIEKQFGKGSIMRLGDGEIEQDIQVVSTGSLGLDIALGVGGLPRGRVVEIYGPESSGKTTLTLQVVAEMQKLGGTCAFIDAEHALDVQYAGKLGVDVGNLLISQPDTGEQALEITDALVRSGSIDLIVIDSVAALVPKAEIEGEMGDSLPGLQARLMSQGLRKLTGTIKRTNCLVIFINQIRMKIGVMFGSPETTTGGNALKFYASVRLDIRRIGSIKKGDEVVGNETKVKVVKNKVSPPFREAFFDILYGQGISRQGEIIDLGVDAKIVEKAGAWYSYNGEKIGQGKDNAREYLRENPDIADEIENKVRLALGVAPLNTVAGAPAEVEG</sequence>
<feature type="chain" id="PRO_0000122637" description="Protein RecA">
    <location>
        <begin position="1"/>
        <end position="353"/>
    </location>
</feature>
<feature type="binding site" evidence="1">
    <location>
        <begin position="75"/>
        <end position="82"/>
    </location>
    <ligand>
        <name>ATP</name>
        <dbReference type="ChEBI" id="CHEBI:30616"/>
    </ligand>
</feature>
<gene>
    <name evidence="1" type="primary">recA</name>
</gene>
<organism>
    <name type="scientific">Cupriavidus necator</name>
    <name type="common">Alcaligenes eutrophus</name>
    <name type="synonym">Ralstonia eutropha</name>
    <dbReference type="NCBI Taxonomy" id="106590"/>
    <lineage>
        <taxon>Bacteria</taxon>
        <taxon>Pseudomonadati</taxon>
        <taxon>Pseudomonadota</taxon>
        <taxon>Betaproteobacteria</taxon>
        <taxon>Burkholderiales</taxon>
        <taxon>Burkholderiaceae</taxon>
        <taxon>Cupriavidus</taxon>
    </lineage>
</organism>
<name>RECA_CUPNE</name>
<dbReference type="EMBL" id="AF312928">
    <property type="protein sequence ID" value="AAK01164.1"/>
    <property type="molecule type" value="Genomic_DNA"/>
</dbReference>
<dbReference type="SMR" id="Q9APB2"/>
<dbReference type="GO" id="GO:0005829">
    <property type="term" value="C:cytosol"/>
    <property type="evidence" value="ECO:0007669"/>
    <property type="project" value="TreeGrafter"/>
</dbReference>
<dbReference type="GO" id="GO:0005524">
    <property type="term" value="F:ATP binding"/>
    <property type="evidence" value="ECO:0007669"/>
    <property type="project" value="UniProtKB-UniRule"/>
</dbReference>
<dbReference type="GO" id="GO:0016887">
    <property type="term" value="F:ATP hydrolysis activity"/>
    <property type="evidence" value="ECO:0007669"/>
    <property type="project" value="InterPro"/>
</dbReference>
<dbReference type="GO" id="GO:0140664">
    <property type="term" value="F:ATP-dependent DNA damage sensor activity"/>
    <property type="evidence" value="ECO:0007669"/>
    <property type="project" value="InterPro"/>
</dbReference>
<dbReference type="GO" id="GO:0003684">
    <property type="term" value="F:damaged DNA binding"/>
    <property type="evidence" value="ECO:0007669"/>
    <property type="project" value="UniProtKB-UniRule"/>
</dbReference>
<dbReference type="GO" id="GO:0003697">
    <property type="term" value="F:single-stranded DNA binding"/>
    <property type="evidence" value="ECO:0007669"/>
    <property type="project" value="UniProtKB-UniRule"/>
</dbReference>
<dbReference type="GO" id="GO:0006310">
    <property type="term" value="P:DNA recombination"/>
    <property type="evidence" value="ECO:0007669"/>
    <property type="project" value="UniProtKB-UniRule"/>
</dbReference>
<dbReference type="GO" id="GO:0006281">
    <property type="term" value="P:DNA repair"/>
    <property type="evidence" value="ECO:0007669"/>
    <property type="project" value="UniProtKB-UniRule"/>
</dbReference>
<dbReference type="GO" id="GO:0009432">
    <property type="term" value="P:SOS response"/>
    <property type="evidence" value="ECO:0007669"/>
    <property type="project" value="UniProtKB-UniRule"/>
</dbReference>
<dbReference type="CDD" id="cd00983">
    <property type="entry name" value="RecA"/>
    <property type="match status" value="1"/>
</dbReference>
<dbReference type="FunFam" id="3.40.50.300:FF:000087">
    <property type="entry name" value="Recombinase RecA"/>
    <property type="match status" value="1"/>
</dbReference>
<dbReference type="Gene3D" id="3.40.50.300">
    <property type="entry name" value="P-loop containing nucleotide triphosphate hydrolases"/>
    <property type="match status" value="1"/>
</dbReference>
<dbReference type="HAMAP" id="MF_00268">
    <property type="entry name" value="RecA"/>
    <property type="match status" value="1"/>
</dbReference>
<dbReference type="InterPro" id="IPR003593">
    <property type="entry name" value="AAA+_ATPase"/>
</dbReference>
<dbReference type="InterPro" id="IPR013765">
    <property type="entry name" value="DNA_recomb/repair_RecA"/>
</dbReference>
<dbReference type="InterPro" id="IPR020584">
    <property type="entry name" value="DNA_recomb/repair_RecA_CS"/>
</dbReference>
<dbReference type="InterPro" id="IPR027417">
    <property type="entry name" value="P-loop_NTPase"/>
</dbReference>
<dbReference type="InterPro" id="IPR049261">
    <property type="entry name" value="RecA-like_C"/>
</dbReference>
<dbReference type="InterPro" id="IPR049428">
    <property type="entry name" value="RecA-like_N"/>
</dbReference>
<dbReference type="InterPro" id="IPR020588">
    <property type="entry name" value="RecA_ATP-bd"/>
</dbReference>
<dbReference type="InterPro" id="IPR023400">
    <property type="entry name" value="RecA_C_sf"/>
</dbReference>
<dbReference type="InterPro" id="IPR020587">
    <property type="entry name" value="RecA_monomer-monomer_interface"/>
</dbReference>
<dbReference type="NCBIfam" id="TIGR02012">
    <property type="entry name" value="tigrfam_recA"/>
    <property type="match status" value="1"/>
</dbReference>
<dbReference type="PANTHER" id="PTHR45900:SF1">
    <property type="entry name" value="MITOCHONDRIAL DNA REPAIR PROTEIN RECA HOMOLOG-RELATED"/>
    <property type="match status" value="1"/>
</dbReference>
<dbReference type="PANTHER" id="PTHR45900">
    <property type="entry name" value="RECA"/>
    <property type="match status" value="1"/>
</dbReference>
<dbReference type="Pfam" id="PF00154">
    <property type="entry name" value="RecA"/>
    <property type="match status" value="1"/>
</dbReference>
<dbReference type="Pfam" id="PF21096">
    <property type="entry name" value="RecA_C"/>
    <property type="match status" value="1"/>
</dbReference>
<dbReference type="PRINTS" id="PR00142">
    <property type="entry name" value="RECA"/>
</dbReference>
<dbReference type="SMART" id="SM00382">
    <property type="entry name" value="AAA"/>
    <property type="match status" value="1"/>
</dbReference>
<dbReference type="SUPFAM" id="SSF52540">
    <property type="entry name" value="P-loop containing nucleoside triphosphate hydrolases"/>
    <property type="match status" value="1"/>
</dbReference>
<dbReference type="SUPFAM" id="SSF54752">
    <property type="entry name" value="RecA protein, C-terminal domain"/>
    <property type="match status" value="1"/>
</dbReference>
<dbReference type="PROSITE" id="PS00321">
    <property type="entry name" value="RECA_1"/>
    <property type="match status" value="1"/>
</dbReference>
<dbReference type="PROSITE" id="PS50162">
    <property type="entry name" value="RECA_2"/>
    <property type="match status" value="1"/>
</dbReference>
<dbReference type="PROSITE" id="PS50163">
    <property type="entry name" value="RECA_3"/>
    <property type="match status" value="1"/>
</dbReference>